<gene>
    <name evidence="1" type="primary">frr</name>
    <name type="ordered locus">Krad_1418</name>
</gene>
<organism>
    <name type="scientific">Kineococcus radiotolerans (strain ATCC BAA-149 / DSM 14245 / SRS30216)</name>
    <dbReference type="NCBI Taxonomy" id="266940"/>
    <lineage>
        <taxon>Bacteria</taxon>
        <taxon>Bacillati</taxon>
        <taxon>Actinomycetota</taxon>
        <taxon>Actinomycetes</taxon>
        <taxon>Kineosporiales</taxon>
        <taxon>Kineosporiaceae</taxon>
        <taxon>Kineococcus</taxon>
    </lineage>
</organism>
<evidence type="ECO:0000255" key="1">
    <source>
        <dbReference type="HAMAP-Rule" id="MF_00040"/>
    </source>
</evidence>
<sequence length="185" mass="20713">MIDDTLLEAEEKMEKAIEVAKGDFGAIRTGRANAAMFHKIMVDYYGAPTPLQQLASFQIPEARSVLITPFDRAAMSEIEKALRNSDLGVNPGNDGNVIRIVLPQLTEERRKDYIKIARTKAEDARVSLRNVRRRAKEELDRIVKDGEAGEDEVGRAEKELEAVTKKHVDAIDELLKNKEAELLAV</sequence>
<proteinExistence type="inferred from homology"/>
<keyword id="KW-0963">Cytoplasm</keyword>
<keyword id="KW-0648">Protein biosynthesis</keyword>
<keyword id="KW-1185">Reference proteome</keyword>
<reference key="1">
    <citation type="journal article" date="2008" name="PLoS ONE">
        <title>Survival in nuclear waste, extreme resistance, and potential applications gleaned from the genome sequence of Kineococcus radiotolerans SRS30216.</title>
        <authorList>
            <person name="Bagwell C.E."/>
            <person name="Bhat S."/>
            <person name="Hawkins G.M."/>
            <person name="Smith B.W."/>
            <person name="Biswas T."/>
            <person name="Hoover T.R."/>
            <person name="Saunders E."/>
            <person name="Han C.S."/>
            <person name="Tsodikov O.V."/>
            <person name="Shimkets L.J."/>
        </authorList>
    </citation>
    <scope>NUCLEOTIDE SEQUENCE [LARGE SCALE GENOMIC DNA]</scope>
    <source>
        <strain>ATCC BAA-149 / DSM 14245 / SRS30216</strain>
    </source>
</reference>
<accession>A6W7W7</accession>
<comment type="function">
    <text evidence="1">Responsible for the release of ribosomes from messenger RNA at the termination of protein biosynthesis. May increase the efficiency of translation by recycling ribosomes from one round of translation to another.</text>
</comment>
<comment type="subcellular location">
    <subcellularLocation>
        <location evidence="1">Cytoplasm</location>
    </subcellularLocation>
</comment>
<comment type="similarity">
    <text evidence="1">Belongs to the RRF family.</text>
</comment>
<feature type="chain" id="PRO_1000074584" description="Ribosome-recycling factor">
    <location>
        <begin position="1"/>
        <end position="185"/>
    </location>
</feature>
<dbReference type="EMBL" id="CP000750">
    <property type="protein sequence ID" value="ABS02906.1"/>
    <property type="molecule type" value="Genomic_DNA"/>
</dbReference>
<dbReference type="RefSeq" id="WP_011981955.1">
    <property type="nucleotide sequence ID" value="NC_009664.2"/>
</dbReference>
<dbReference type="SMR" id="A6W7W7"/>
<dbReference type="STRING" id="266940.Krad_1418"/>
<dbReference type="KEGG" id="kra:Krad_1418"/>
<dbReference type="eggNOG" id="COG0233">
    <property type="taxonomic scope" value="Bacteria"/>
</dbReference>
<dbReference type="HOGENOM" id="CLU_073981_2_0_11"/>
<dbReference type="OrthoDB" id="9804006at2"/>
<dbReference type="Proteomes" id="UP000001116">
    <property type="component" value="Chromosome"/>
</dbReference>
<dbReference type="GO" id="GO:0005737">
    <property type="term" value="C:cytoplasm"/>
    <property type="evidence" value="ECO:0007669"/>
    <property type="project" value="UniProtKB-SubCell"/>
</dbReference>
<dbReference type="GO" id="GO:0043023">
    <property type="term" value="F:ribosomal large subunit binding"/>
    <property type="evidence" value="ECO:0007669"/>
    <property type="project" value="TreeGrafter"/>
</dbReference>
<dbReference type="GO" id="GO:0006415">
    <property type="term" value="P:translational termination"/>
    <property type="evidence" value="ECO:0007669"/>
    <property type="project" value="UniProtKB-UniRule"/>
</dbReference>
<dbReference type="CDD" id="cd00520">
    <property type="entry name" value="RRF"/>
    <property type="match status" value="1"/>
</dbReference>
<dbReference type="FunFam" id="1.10.132.20:FF:000001">
    <property type="entry name" value="Ribosome-recycling factor"/>
    <property type="match status" value="1"/>
</dbReference>
<dbReference type="FunFam" id="3.30.1360.40:FF:000001">
    <property type="entry name" value="Ribosome-recycling factor"/>
    <property type="match status" value="1"/>
</dbReference>
<dbReference type="Gene3D" id="3.30.1360.40">
    <property type="match status" value="1"/>
</dbReference>
<dbReference type="Gene3D" id="1.10.132.20">
    <property type="entry name" value="Ribosome-recycling factor"/>
    <property type="match status" value="1"/>
</dbReference>
<dbReference type="HAMAP" id="MF_00040">
    <property type="entry name" value="RRF"/>
    <property type="match status" value="1"/>
</dbReference>
<dbReference type="InterPro" id="IPR002661">
    <property type="entry name" value="Ribosome_recyc_fac"/>
</dbReference>
<dbReference type="InterPro" id="IPR023584">
    <property type="entry name" value="Ribosome_recyc_fac_dom"/>
</dbReference>
<dbReference type="InterPro" id="IPR036191">
    <property type="entry name" value="RRF_sf"/>
</dbReference>
<dbReference type="NCBIfam" id="TIGR00496">
    <property type="entry name" value="frr"/>
    <property type="match status" value="1"/>
</dbReference>
<dbReference type="PANTHER" id="PTHR20982:SF3">
    <property type="entry name" value="MITOCHONDRIAL RIBOSOME RECYCLING FACTOR PSEUDO 1"/>
    <property type="match status" value="1"/>
</dbReference>
<dbReference type="PANTHER" id="PTHR20982">
    <property type="entry name" value="RIBOSOME RECYCLING FACTOR"/>
    <property type="match status" value="1"/>
</dbReference>
<dbReference type="Pfam" id="PF01765">
    <property type="entry name" value="RRF"/>
    <property type="match status" value="1"/>
</dbReference>
<dbReference type="SUPFAM" id="SSF55194">
    <property type="entry name" value="Ribosome recycling factor, RRF"/>
    <property type="match status" value="1"/>
</dbReference>
<protein>
    <recommendedName>
        <fullName evidence="1">Ribosome-recycling factor</fullName>
        <shortName evidence="1">RRF</shortName>
    </recommendedName>
    <alternativeName>
        <fullName evidence="1">Ribosome-releasing factor</fullName>
    </alternativeName>
</protein>
<name>RRF_KINRD</name>